<protein>
    <recommendedName>
        <fullName evidence="1">Ion-translocating oxidoreductase complex subunit G</fullName>
        <ecNumber evidence="1">7.-.-.-</ecNumber>
    </recommendedName>
    <alternativeName>
        <fullName evidence="1">Rnf electron transport complex subunit G</fullName>
    </alternativeName>
</protein>
<keyword id="KW-0997">Cell inner membrane</keyword>
<keyword id="KW-1003">Cell membrane</keyword>
<keyword id="KW-0249">Electron transport</keyword>
<keyword id="KW-0285">Flavoprotein</keyword>
<keyword id="KW-0288">FMN</keyword>
<keyword id="KW-0472">Membrane</keyword>
<keyword id="KW-0597">Phosphoprotein</keyword>
<keyword id="KW-1278">Translocase</keyword>
<keyword id="KW-0812">Transmembrane</keyword>
<keyword id="KW-1133">Transmembrane helix</keyword>
<keyword id="KW-0813">Transport</keyword>
<feature type="chain" id="PRO_1000125876" description="Ion-translocating oxidoreductase complex subunit G">
    <location>
        <begin position="1"/>
        <end position="210"/>
    </location>
</feature>
<feature type="transmembrane region" description="Helical" evidence="1">
    <location>
        <begin position="9"/>
        <end position="29"/>
    </location>
</feature>
<feature type="modified residue" description="FMN phosphoryl threonine" evidence="1">
    <location>
        <position position="176"/>
    </location>
</feature>
<proteinExistence type="inferred from homology"/>
<accession>B5FCN1</accession>
<evidence type="ECO:0000255" key="1">
    <source>
        <dbReference type="HAMAP-Rule" id="MF_00479"/>
    </source>
</evidence>
<comment type="function">
    <text evidence="1">Part of a membrane-bound complex that couples electron transfer with translocation of ions across the membrane.</text>
</comment>
<comment type="cofactor">
    <cofactor evidence="1">
        <name>FMN</name>
        <dbReference type="ChEBI" id="CHEBI:58210"/>
    </cofactor>
</comment>
<comment type="subunit">
    <text evidence="1">The complex is composed of six subunits: RnfA, RnfB, RnfC, RnfD, RnfE and RnfG.</text>
</comment>
<comment type="subcellular location">
    <subcellularLocation>
        <location evidence="1">Cell inner membrane</location>
        <topology evidence="1">Single-pass membrane protein</topology>
    </subcellularLocation>
</comment>
<comment type="similarity">
    <text evidence="1">Belongs to the RnfG family.</text>
</comment>
<sequence>MLTTMKKSSLVLALFAIAATALVTITYALTKDQIAYQQQQQLLSVLNQVVPKEQHDNELYKACILVKNNDALGSKQAMPIYLASLNGKHSGAAIEAIAPDGYSGNIKIIVGVDSDAIVTGVRVLSHQETPGLGDKIDIRITRWVDAFLGKTVESSEDKNWAVQKDGGQFDQFTGATITPRAVVKAVKRAVWFYKTHQEELLTLPLNCETK</sequence>
<organism>
    <name type="scientific">Aliivibrio fischeri (strain MJ11)</name>
    <name type="common">Vibrio fischeri</name>
    <dbReference type="NCBI Taxonomy" id="388396"/>
    <lineage>
        <taxon>Bacteria</taxon>
        <taxon>Pseudomonadati</taxon>
        <taxon>Pseudomonadota</taxon>
        <taxon>Gammaproteobacteria</taxon>
        <taxon>Vibrionales</taxon>
        <taxon>Vibrionaceae</taxon>
        <taxon>Aliivibrio</taxon>
    </lineage>
</organism>
<name>RNFG_ALIFM</name>
<gene>
    <name evidence="1" type="primary">rnfG</name>
    <name type="ordered locus">VFMJ11_0970</name>
</gene>
<reference key="1">
    <citation type="submission" date="2008-08" db="EMBL/GenBank/DDBJ databases">
        <title>Complete sequence of Vibrio fischeri strain MJ11.</title>
        <authorList>
            <person name="Mandel M.J."/>
            <person name="Stabb E.V."/>
            <person name="Ruby E.G."/>
            <person name="Ferriera S."/>
            <person name="Johnson J."/>
            <person name="Kravitz S."/>
            <person name="Beeson K."/>
            <person name="Sutton G."/>
            <person name="Rogers Y.-H."/>
            <person name="Friedman R."/>
            <person name="Frazier M."/>
            <person name="Venter J.C."/>
        </authorList>
    </citation>
    <scope>NUCLEOTIDE SEQUENCE [LARGE SCALE GENOMIC DNA]</scope>
    <source>
        <strain>MJ11</strain>
    </source>
</reference>
<dbReference type="EC" id="7.-.-.-" evidence="1"/>
<dbReference type="EMBL" id="CP001139">
    <property type="protein sequence ID" value="ACH67160.1"/>
    <property type="molecule type" value="Genomic_DNA"/>
</dbReference>
<dbReference type="RefSeq" id="WP_012534239.1">
    <property type="nucleotide sequence ID" value="NC_011184.1"/>
</dbReference>
<dbReference type="SMR" id="B5FCN1"/>
<dbReference type="KEGG" id="vfm:VFMJ11_0970"/>
<dbReference type="HOGENOM" id="CLU_077882_1_0_6"/>
<dbReference type="Proteomes" id="UP000001857">
    <property type="component" value="Chromosome I"/>
</dbReference>
<dbReference type="GO" id="GO:0005886">
    <property type="term" value="C:plasma membrane"/>
    <property type="evidence" value="ECO:0007669"/>
    <property type="project" value="UniProtKB-SubCell"/>
</dbReference>
<dbReference type="GO" id="GO:0009055">
    <property type="term" value="F:electron transfer activity"/>
    <property type="evidence" value="ECO:0007669"/>
    <property type="project" value="InterPro"/>
</dbReference>
<dbReference type="GO" id="GO:0010181">
    <property type="term" value="F:FMN binding"/>
    <property type="evidence" value="ECO:0007669"/>
    <property type="project" value="InterPro"/>
</dbReference>
<dbReference type="GO" id="GO:0022900">
    <property type="term" value="P:electron transport chain"/>
    <property type="evidence" value="ECO:0007669"/>
    <property type="project" value="UniProtKB-UniRule"/>
</dbReference>
<dbReference type="HAMAP" id="MF_00479">
    <property type="entry name" value="RsxG_RnfG"/>
    <property type="match status" value="1"/>
</dbReference>
<dbReference type="InterPro" id="IPR007329">
    <property type="entry name" value="FMN-bd"/>
</dbReference>
<dbReference type="InterPro" id="IPR010209">
    <property type="entry name" value="Ion_transpt_RnfG/RsxG"/>
</dbReference>
<dbReference type="NCBIfam" id="NF002519">
    <property type="entry name" value="PRK01908.1"/>
    <property type="match status" value="1"/>
</dbReference>
<dbReference type="NCBIfam" id="TIGR01947">
    <property type="entry name" value="rnfG"/>
    <property type="match status" value="1"/>
</dbReference>
<dbReference type="PANTHER" id="PTHR36118">
    <property type="entry name" value="ION-TRANSLOCATING OXIDOREDUCTASE COMPLEX SUBUNIT G"/>
    <property type="match status" value="1"/>
</dbReference>
<dbReference type="PANTHER" id="PTHR36118:SF1">
    <property type="entry name" value="ION-TRANSLOCATING OXIDOREDUCTASE COMPLEX SUBUNIT G"/>
    <property type="match status" value="1"/>
</dbReference>
<dbReference type="Pfam" id="PF04205">
    <property type="entry name" value="FMN_bind"/>
    <property type="match status" value="1"/>
</dbReference>
<dbReference type="PIRSF" id="PIRSF006091">
    <property type="entry name" value="E_trnsport_RnfG"/>
    <property type="match status" value="1"/>
</dbReference>
<dbReference type="SMART" id="SM00900">
    <property type="entry name" value="FMN_bind"/>
    <property type="match status" value="1"/>
</dbReference>